<keyword id="KW-0002">3D-structure</keyword>
<keyword id="KW-0025">Alternative splicing</keyword>
<keyword id="KW-0378">Hydrolase</keyword>
<keyword id="KW-0597">Phosphoprotein</keyword>
<keyword id="KW-0645">Protease</keyword>
<keyword id="KW-1267">Proteomics identification</keyword>
<keyword id="KW-1185">Reference proteome</keyword>
<keyword id="KW-0788">Thiol protease</keyword>
<keyword id="KW-0833">Ubl conjugation pathway</keyword>
<accession>Q8N5J2</accession>
<accession>B3KWP4</accession>
<accession>B3KWV8</accession>
<accession>B4DXF2</accession>
<accession>B4E1S4</accession>
<accession>D3DV09</accession>
<accession>J3KP53</accession>
<accession>Q5SZF0</accession>
<accession>Q9NUL9</accession>
<accession>Q9P2F7</accession>
<protein>
    <recommendedName>
        <fullName evidence="9">Ubiquitin carboxyl-terminal hydrolase MINDY-1</fullName>
        <ecNumber evidence="5">3.4.19.12</ecNumber>
    </recommendedName>
    <alternativeName>
        <fullName evidence="9">Deubiquitinating enzyme MINDY-1</fullName>
    </alternativeName>
    <alternativeName>
        <fullName>Protein FAM63A</fullName>
    </alternativeName>
</protein>
<comment type="function">
    <text evidence="5 6">Hydrolase that can specifically remove 'Lys-48'-linked conjugated ubiquitin from proteins. Has exodeubiquitinase activity and has a preference for long polyubiquitin chains. May play a regulatory role at the level of protein turnover.</text>
</comment>
<comment type="catalytic activity">
    <reaction evidence="5">
        <text>Thiol-dependent hydrolysis of ester, thioester, amide, peptide and isopeptide bonds formed by the C-terminal Gly of ubiquitin (a 76-residue protein attached to proteins as an intracellular targeting signal).</text>
        <dbReference type="EC" id="3.4.19.12"/>
    </reaction>
</comment>
<comment type="interaction">
    <interactant intactId="EBI-372322">
        <id>Q8N5J2</id>
    </interactant>
    <interactant intactId="EBI-10172181">
        <id>Q53SE7</id>
        <label>FLJ13057</label>
    </interactant>
    <organismsDiffer>false</organismsDiffer>
    <experiments>3</experiments>
</comment>
<comment type="interaction">
    <interactant intactId="EBI-12382151">
        <id>Q8N5J2-3</id>
    </interactant>
    <interactant intactId="EBI-718729">
        <id>P55212</id>
        <label>CASP6</label>
    </interactant>
    <organismsDiffer>false</organismsDiffer>
    <experiments>3</experiments>
</comment>
<comment type="interaction">
    <interactant intactId="EBI-12382151">
        <id>Q8N5J2-3</id>
    </interactant>
    <interactant intactId="EBI-79333">
        <id>P36544</id>
        <label>CHRNA7</label>
    </interactant>
    <organismsDiffer>false</organismsDiffer>
    <experiments>3</experiments>
</comment>
<comment type="interaction">
    <interactant intactId="EBI-12382151">
        <id>Q8N5J2-3</id>
    </interactant>
    <interactant intactId="EBI-724310">
        <id>Q15038</id>
        <label>DAZAP2</label>
    </interactant>
    <organismsDiffer>false</organismsDiffer>
    <experiments>3</experiments>
</comment>
<comment type="interaction">
    <interactant intactId="EBI-12382151">
        <id>Q8N5J2-3</id>
    </interactant>
    <interactant intactId="EBI-2548508">
        <id>Q96IK5</id>
        <label>GMCL1</label>
    </interactant>
    <organismsDiffer>false</organismsDiffer>
    <experiments>3</experiments>
</comment>
<comment type="alternative products">
    <event type="alternative splicing"/>
    <isoform>
        <id>Q8N5J2-1</id>
        <name>1</name>
        <sequence type="displayed"/>
    </isoform>
    <isoform>
        <id>Q8N5J2-2</id>
        <name>2</name>
        <sequence type="described" ref="VSP_034715"/>
    </isoform>
    <isoform>
        <id>Q8N5J2-3</id>
        <name>3</name>
        <sequence type="described" ref="VSP_037077"/>
    </isoform>
    <isoform>
        <id>Q8N5J2-4</id>
        <name>4</name>
        <sequence type="described" ref="VSP_037076"/>
    </isoform>
</comment>
<comment type="similarity">
    <text evidence="10">Belongs to the MINDY deubiquitinase family. FAM63 subfamily.</text>
</comment>
<comment type="sequence caution" evidence="10">
    <conflict type="erroneous initiation">
        <sequence resource="EMBL-CDS" id="BAA92628"/>
    </conflict>
    <text>Extended N-terminus.</text>
</comment>
<gene>
    <name evidence="12" type="primary">MINDY1</name>
    <name type="synonym">FAM63A</name>
    <name type="synonym">KIAA1390</name>
</gene>
<organism>
    <name type="scientific">Homo sapiens</name>
    <name type="common">Human</name>
    <dbReference type="NCBI Taxonomy" id="9606"/>
    <lineage>
        <taxon>Eukaryota</taxon>
        <taxon>Metazoa</taxon>
        <taxon>Chordata</taxon>
        <taxon>Craniata</taxon>
        <taxon>Vertebrata</taxon>
        <taxon>Euteleostomi</taxon>
        <taxon>Mammalia</taxon>
        <taxon>Eutheria</taxon>
        <taxon>Euarchontoglires</taxon>
        <taxon>Primates</taxon>
        <taxon>Haplorrhini</taxon>
        <taxon>Catarrhini</taxon>
        <taxon>Hominidae</taxon>
        <taxon>Homo</taxon>
    </lineage>
</organism>
<dbReference type="EC" id="3.4.19.12" evidence="5"/>
<dbReference type="EMBL" id="AB037811">
    <property type="protein sequence ID" value="BAA92628.1"/>
    <property type="status" value="ALT_INIT"/>
    <property type="molecule type" value="mRNA"/>
</dbReference>
<dbReference type="EMBL" id="AK002142">
    <property type="protein sequence ID" value="BAA92104.1"/>
    <property type="molecule type" value="mRNA"/>
</dbReference>
<dbReference type="EMBL" id="AK125493">
    <property type="protein sequence ID" value="BAG54206.1"/>
    <property type="molecule type" value="mRNA"/>
</dbReference>
<dbReference type="EMBL" id="AK125959">
    <property type="protein sequence ID" value="BAG54270.1"/>
    <property type="molecule type" value="mRNA"/>
</dbReference>
<dbReference type="EMBL" id="AK301946">
    <property type="protein sequence ID" value="BAG63364.1"/>
    <property type="molecule type" value="mRNA"/>
</dbReference>
<dbReference type="EMBL" id="AK303962">
    <property type="protein sequence ID" value="BAG64886.1"/>
    <property type="molecule type" value="mRNA"/>
</dbReference>
<dbReference type="EMBL" id="AL590133">
    <property type="status" value="NOT_ANNOTATED_CDS"/>
    <property type="molecule type" value="Genomic_DNA"/>
</dbReference>
<dbReference type="EMBL" id="CH471121">
    <property type="protein sequence ID" value="EAW53491.1"/>
    <property type="molecule type" value="Genomic_DNA"/>
</dbReference>
<dbReference type="EMBL" id="CH471121">
    <property type="protein sequence ID" value="EAW53492.1"/>
    <property type="molecule type" value="Genomic_DNA"/>
</dbReference>
<dbReference type="EMBL" id="CH471121">
    <property type="protein sequence ID" value="EAW53493.1"/>
    <property type="molecule type" value="Genomic_DNA"/>
</dbReference>
<dbReference type="EMBL" id="CH471121">
    <property type="protein sequence ID" value="EAW53495.1"/>
    <property type="molecule type" value="Genomic_DNA"/>
</dbReference>
<dbReference type="EMBL" id="BC032321">
    <property type="protein sequence ID" value="AAH32321.1"/>
    <property type="molecule type" value="mRNA"/>
</dbReference>
<dbReference type="CCDS" id="CCDS30854.1">
    <molecule id="Q8N5J2-2"/>
</dbReference>
<dbReference type="CCDS" id="CCDS55635.1">
    <molecule id="Q8N5J2-4"/>
</dbReference>
<dbReference type="CCDS" id="CCDS976.1">
    <molecule id="Q8N5J2-1"/>
</dbReference>
<dbReference type="RefSeq" id="NP_001035307.2">
    <molecule id="Q8N5J2-2"/>
    <property type="nucleotide sequence ID" value="NM_001040217.3"/>
</dbReference>
<dbReference type="RefSeq" id="NP_001156730.3">
    <molecule id="Q8N5J2-1"/>
    <property type="nucleotide sequence ID" value="NM_001163258.3"/>
</dbReference>
<dbReference type="RefSeq" id="NP_001156731.2">
    <molecule id="Q8N5J2-4"/>
    <property type="nucleotide sequence ID" value="NM_001163259.2"/>
</dbReference>
<dbReference type="RefSeq" id="NP_001156732.2">
    <molecule id="Q8N5J2-2"/>
    <property type="nucleotide sequence ID" value="NM_001163260.2"/>
</dbReference>
<dbReference type="RefSeq" id="NP_001306927.2">
    <molecule id="Q8N5J2-1"/>
    <property type="nucleotide sequence ID" value="NM_001319998.2"/>
</dbReference>
<dbReference type="RefSeq" id="NP_001363594.1">
    <molecule id="Q8N5J2-1"/>
    <property type="nucleotide sequence ID" value="NM_001376665.1"/>
</dbReference>
<dbReference type="RefSeq" id="NP_060849.2">
    <molecule id="Q8N5J2-1"/>
    <property type="nucleotide sequence ID" value="NM_018379.4"/>
</dbReference>
<dbReference type="RefSeq" id="XP_016857261.1">
    <property type="nucleotide sequence ID" value="XM_017001772.1"/>
</dbReference>
<dbReference type="RefSeq" id="XP_016857266.1">
    <molecule id="Q8N5J2-3"/>
    <property type="nucleotide sequence ID" value="XM_017001777.2"/>
</dbReference>
<dbReference type="PDB" id="5JKN">
    <property type="method" value="X-ray"/>
    <property type="resolution" value="3.00 A"/>
    <property type="chains" value="A=110-384"/>
</dbReference>
<dbReference type="PDB" id="5JQS">
    <property type="method" value="X-ray"/>
    <property type="resolution" value="2.65 A"/>
    <property type="chains" value="A=110-384"/>
</dbReference>
<dbReference type="PDB" id="5MN9">
    <property type="method" value="X-ray"/>
    <property type="resolution" value="2.05 A"/>
    <property type="chains" value="C=388-426"/>
</dbReference>
<dbReference type="PDB" id="6TUV">
    <property type="method" value="X-ray"/>
    <property type="resolution" value="2.16 A"/>
    <property type="chains" value="A=110-384"/>
</dbReference>
<dbReference type="PDB" id="6TXB">
    <property type="method" value="X-ray"/>
    <property type="resolution" value="2.18 A"/>
    <property type="chains" value="A=110-384"/>
</dbReference>
<dbReference type="PDB" id="6Y6R">
    <property type="method" value="X-ray"/>
    <property type="resolution" value="3.32 A"/>
    <property type="chains" value="A=110-384"/>
</dbReference>
<dbReference type="PDB" id="6YJG">
    <property type="method" value="X-ray"/>
    <property type="resolution" value="3.28 A"/>
    <property type="chains" value="A=97-384"/>
</dbReference>
<dbReference type="PDB" id="6Z90">
    <property type="method" value="X-ray"/>
    <property type="resolution" value="3.59 A"/>
    <property type="chains" value="A=110-384"/>
</dbReference>
<dbReference type="PDBsum" id="5JKN"/>
<dbReference type="PDBsum" id="5JQS"/>
<dbReference type="PDBsum" id="5MN9"/>
<dbReference type="PDBsum" id="6TUV"/>
<dbReference type="PDBsum" id="6TXB"/>
<dbReference type="PDBsum" id="6Y6R"/>
<dbReference type="PDBsum" id="6YJG"/>
<dbReference type="PDBsum" id="6Z90"/>
<dbReference type="SMR" id="Q8N5J2"/>
<dbReference type="BioGRID" id="120906">
    <property type="interactions" value="42"/>
</dbReference>
<dbReference type="FunCoup" id="Q8N5J2">
    <property type="interactions" value="968"/>
</dbReference>
<dbReference type="IntAct" id="Q8N5J2">
    <property type="interactions" value="36"/>
</dbReference>
<dbReference type="STRING" id="9606.ENSP00000354669"/>
<dbReference type="GlyGen" id="Q8N5J2">
    <property type="glycosylation" value="2 sites, 1 O-linked glycan (1 site)"/>
</dbReference>
<dbReference type="iPTMnet" id="Q8N5J2"/>
<dbReference type="PhosphoSitePlus" id="Q8N5J2"/>
<dbReference type="BioMuta" id="MINDY1"/>
<dbReference type="DMDM" id="311033379"/>
<dbReference type="jPOST" id="Q8N5J2"/>
<dbReference type="MassIVE" id="Q8N5J2"/>
<dbReference type="PaxDb" id="9606-ENSP00000354669"/>
<dbReference type="PeptideAtlas" id="Q8N5J2"/>
<dbReference type="ProteomicsDB" id="72065">
    <molecule id="Q8N5J2-1"/>
</dbReference>
<dbReference type="ProteomicsDB" id="72066">
    <molecule id="Q8N5J2-2"/>
</dbReference>
<dbReference type="ProteomicsDB" id="72067">
    <molecule id="Q8N5J2-3"/>
</dbReference>
<dbReference type="ProteomicsDB" id="72068">
    <molecule id="Q8N5J2-4"/>
</dbReference>
<dbReference type="Pumba" id="Q8N5J2"/>
<dbReference type="TopDownProteomics" id="Q8N5J2-2">
    <molecule id="Q8N5J2-2"/>
</dbReference>
<dbReference type="Antibodypedia" id="34043">
    <property type="antibodies" value="87 antibodies from 14 providers"/>
</dbReference>
<dbReference type="DNASU" id="55793"/>
<dbReference type="Ensembl" id="ENST00000312210.9">
    <molecule id="Q8N5J2-2"/>
    <property type="protein sequence ID" value="ENSP00000310923.5"/>
    <property type="gene ID" value="ENSG00000143409.18"/>
</dbReference>
<dbReference type="Ensembl" id="ENST00000361738.12">
    <molecule id="Q8N5J2-1"/>
    <property type="protein sequence ID" value="ENSP00000354669.7"/>
    <property type="gene ID" value="ENSG00000143409.18"/>
</dbReference>
<dbReference type="Ensembl" id="ENST00000361936.9">
    <molecule id="Q8N5J2-1"/>
    <property type="protein sequence ID" value="ENSP00000354814.5"/>
    <property type="gene ID" value="ENSG00000143409.18"/>
</dbReference>
<dbReference type="Ensembl" id="ENST00000493834.2">
    <molecule id="Q8N5J2-4"/>
    <property type="protein sequence ID" value="ENSP00000437174.2"/>
    <property type="gene ID" value="ENSG00000143409.18"/>
</dbReference>
<dbReference type="Ensembl" id="ENST00000683666.2">
    <molecule id="Q8N5J2-1"/>
    <property type="protein sequence ID" value="ENSP00000507359.1"/>
    <property type="gene ID" value="ENSG00000143409.18"/>
</dbReference>
<dbReference type="GeneID" id="55793"/>
<dbReference type="KEGG" id="hsa:55793"/>
<dbReference type="MANE-Select" id="ENST00000683666.2">
    <property type="protein sequence ID" value="ENSP00000507359.1"/>
    <property type="RefSeq nucleotide sequence ID" value="NM_001376665.1"/>
    <property type="RefSeq protein sequence ID" value="NP_001363594.1"/>
</dbReference>
<dbReference type="UCSC" id="uc001ewd.4">
    <molecule id="Q8N5J2-1"/>
    <property type="organism name" value="human"/>
</dbReference>
<dbReference type="AGR" id="HGNC:25648"/>
<dbReference type="CTD" id="55793"/>
<dbReference type="DisGeNET" id="55793"/>
<dbReference type="GeneCards" id="MINDY1"/>
<dbReference type="HGNC" id="HGNC:25648">
    <property type="gene designation" value="MINDY1"/>
</dbReference>
<dbReference type="HPA" id="ENSG00000143409">
    <property type="expression patterns" value="Low tissue specificity"/>
</dbReference>
<dbReference type="MIM" id="618407">
    <property type="type" value="gene"/>
</dbReference>
<dbReference type="neXtProt" id="NX_Q8N5J2"/>
<dbReference type="OpenTargets" id="ENSG00000143409"/>
<dbReference type="PharmGKB" id="PA142671872"/>
<dbReference type="VEuPathDB" id="HostDB:ENSG00000143409"/>
<dbReference type="eggNOG" id="KOG2427">
    <property type="taxonomic scope" value="Eukaryota"/>
</dbReference>
<dbReference type="GeneTree" id="ENSGT00390000016607"/>
<dbReference type="HOGENOM" id="CLU_022566_5_0_1"/>
<dbReference type="InParanoid" id="Q8N5J2"/>
<dbReference type="OMA" id="HTRFSNE"/>
<dbReference type="OrthoDB" id="10261212at2759"/>
<dbReference type="PAN-GO" id="Q8N5J2">
    <property type="GO annotations" value="3 GO annotations based on evolutionary models"/>
</dbReference>
<dbReference type="PhylomeDB" id="Q8N5J2"/>
<dbReference type="TreeFam" id="TF314589"/>
<dbReference type="PathwayCommons" id="Q8N5J2"/>
<dbReference type="SignaLink" id="Q8N5J2"/>
<dbReference type="BioGRID-ORCS" id="55793">
    <property type="hits" value="70 hits in 1202 CRISPR screens"/>
</dbReference>
<dbReference type="ChiTaRS" id="FAM63A">
    <property type="organism name" value="human"/>
</dbReference>
<dbReference type="GenomeRNAi" id="55793"/>
<dbReference type="Pharos" id="Q8N5J2">
    <property type="development level" value="Tbio"/>
</dbReference>
<dbReference type="PRO" id="PR:Q8N5J2"/>
<dbReference type="Proteomes" id="UP000005640">
    <property type="component" value="Chromosome 1"/>
</dbReference>
<dbReference type="RNAct" id="Q8N5J2">
    <property type="molecule type" value="protein"/>
</dbReference>
<dbReference type="Bgee" id="ENSG00000143409">
    <property type="expression patterns" value="Expressed in body of pancreas and 175 other cell types or tissues"/>
</dbReference>
<dbReference type="ExpressionAtlas" id="Q8N5J2">
    <property type="expression patterns" value="baseline and differential"/>
</dbReference>
<dbReference type="GO" id="GO:0016604">
    <property type="term" value="C:nuclear body"/>
    <property type="evidence" value="ECO:0000314"/>
    <property type="project" value="HPA"/>
</dbReference>
<dbReference type="GO" id="GO:0005654">
    <property type="term" value="C:nucleoplasm"/>
    <property type="evidence" value="ECO:0000314"/>
    <property type="project" value="HPA"/>
</dbReference>
<dbReference type="GO" id="GO:0016807">
    <property type="term" value="F:cysteine-type carboxypeptidase activity"/>
    <property type="evidence" value="ECO:0000314"/>
    <property type="project" value="UniProtKB"/>
</dbReference>
<dbReference type="GO" id="GO:0004843">
    <property type="term" value="F:cysteine-type deubiquitinase activity"/>
    <property type="evidence" value="ECO:0007669"/>
    <property type="project" value="UniProtKB-EC"/>
</dbReference>
<dbReference type="GO" id="GO:1990380">
    <property type="term" value="F:K48-linked deubiquitinase activity"/>
    <property type="evidence" value="ECO:0000314"/>
    <property type="project" value="UniProtKB"/>
</dbReference>
<dbReference type="GO" id="GO:0036435">
    <property type="term" value="F:K48-linked polyubiquitin modification-dependent protein binding"/>
    <property type="evidence" value="ECO:0000314"/>
    <property type="project" value="UniProtKB"/>
</dbReference>
<dbReference type="GO" id="GO:0006508">
    <property type="term" value="P:proteolysis"/>
    <property type="evidence" value="ECO:0007669"/>
    <property type="project" value="UniProtKB-KW"/>
</dbReference>
<dbReference type="InterPro" id="IPR007518">
    <property type="entry name" value="MINDY"/>
</dbReference>
<dbReference type="InterPro" id="IPR033979">
    <property type="entry name" value="MINDY_domain"/>
</dbReference>
<dbReference type="PANTHER" id="PTHR18063">
    <property type="entry name" value="NF-E2 INDUCIBLE PROTEIN"/>
    <property type="match status" value="1"/>
</dbReference>
<dbReference type="PANTHER" id="PTHR18063:SF7">
    <property type="entry name" value="UBIQUITIN CARBOXYL-TERMINAL HYDROLASE MINDY-1"/>
    <property type="match status" value="1"/>
</dbReference>
<dbReference type="Pfam" id="PF04424">
    <property type="entry name" value="MINDY_DUB"/>
    <property type="match status" value="1"/>
</dbReference>
<sequence>MEYHQPEDPAPGKAGTAEAVIPENHEVLAGPDEHPQDTDARDADGEAREREPADQALLPSQCGDNLESPLPEASSAPPGPTLGTLPEVETIRACSMPQELPQSPRTRQPEPDFYCVKWIPWKGEQTPIITQSTNGPCPLLAIMNILFLQWKVKLPPQKEVITSDELMAHLGNCLLSIKPQEKSEGLQLNFQQNVDDAMTVLPKLATGLDVNVRFTGVSDFEYTPECSVFDLLGIPLYHGWLVDPQSPEAVRAVGKLSYNQLVERIITCKHSSDTNLVTEGLIAEQFLETTAAQLTYHGLCELTAAAKEGELSVFFRNNHFSTMTKHKSHLYLLVTDQGFLQEEQVVWESLHNVDGDSCFCDSDFHLSHSLGKGPGAEGGSGSPETQLQVDQDYLIALSLQQQQPRGPLGLTDLELAQQLQQEEYQQQQAAQPVRMRTRVLSLQGRGATSGRPAGERRQRPKHESDCILL</sequence>
<reference key="1">
    <citation type="journal article" date="2000" name="DNA Res.">
        <title>Prediction of the coding sequences of unidentified human genes. XVI. The complete sequences of 150 new cDNA clones from brain which code for large proteins in vitro.</title>
        <authorList>
            <person name="Nagase T."/>
            <person name="Kikuno R."/>
            <person name="Ishikawa K."/>
            <person name="Hirosawa M."/>
            <person name="Ohara O."/>
        </authorList>
    </citation>
    <scope>NUCLEOTIDE SEQUENCE [LARGE SCALE MRNA] (ISOFORM 1)</scope>
    <scope>VARIANT LYS-385</scope>
    <source>
        <tissue>Brain</tissue>
    </source>
</reference>
<reference key="2">
    <citation type="journal article" date="2004" name="Nat. Genet.">
        <title>Complete sequencing and characterization of 21,243 full-length human cDNAs.</title>
        <authorList>
            <person name="Ota T."/>
            <person name="Suzuki Y."/>
            <person name="Nishikawa T."/>
            <person name="Otsuki T."/>
            <person name="Sugiyama T."/>
            <person name="Irie R."/>
            <person name="Wakamatsu A."/>
            <person name="Hayashi K."/>
            <person name="Sato H."/>
            <person name="Nagai K."/>
            <person name="Kimura K."/>
            <person name="Makita H."/>
            <person name="Sekine M."/>
            <person name="Obayashi M."/>
            <person name="Nishi T."/>
            <person name="Shibahara T."/>
            <person name="Tanaka T."/>
            <person name="Ishii S."/>
            <person name="Yamamoto J."/>
            <person name="Saito K."/>
            <person name="Kawai Y."/>
            <person name="Isono Y."/>
            <person name="Nakamura Y."/>
            <person name="Nagahari K."/>
            <person name="Murakami K."/>
            <person name="Yasuda T."/>
            <person name="Iwayanagi T."/>
            <person name="Wagatsuma M."/>
            <person name="Shiratori A."/>
            <person name="Sudo H."/>
            <person name="Hosoiri T."/>
            <person name="Kaku Y."/>
            <person name="Kodaira H."/>
            <person name="Kondo H."/>
            <person name="Sugawara M."/>
            <person name="Takahashi M."/>
            <person name="Kanda K."/>
            <person name="Yokoi T."/>
            <person name="Furuya T."/>
            <person name="Kikkawa E."/>
            <person name="Omura Y."/>
            <person name="Abe K."/>
            <person name="Kamihara K."/>
            <person name="Katsuta N."/>
            <person name="Sato K."/>
            <person name="Tanikawa M."/>
            <person name="Yamazaki M."/>
            <person name="Ninomiya K."/>
            <person name="Ishibashi T."/>
            <person name="Yamashita H."/>
            <person name="Murakawa K."/>
            <person name="Fujimori K."/>
            <person name="Tanai H."/>
            <person name="Kimata M."/>
            <person name="Watanabe M."/>
            <person name="Hiraoka S."/>
            <person name="Chiba Y."/>
            <person name="Ishida S."/>
            <person name="Ono Y."/>
            <person name="Takiguchi S."/>
            <person name="Watanabe S."/>
            <person name="Yosida M."/>
            <person name="Hotuta T."/>
            <person name="Kusano J."/>
            <person name="Kanehori K."/>
            <person name="Takahashi-Fujii A."/>
            <person name="Hara H."/>
            <person name="Tanase T.-O."/>
            <person name="Nomura Y."/>
            <person name="Togiya S."/>
            <person name="Komai F."/>
            <person name="Hara R."/>
            <person name="Takeuchi K."/>
            <person name="Arita M."/>
            <person name="Imose N."/>
            <person name="Musashino K."/>
            <person name="Yuuki H."/>
            <person name="Oshima A."/>
            <person name="Sasaki N."/>
            <person name="Aotsuka S."/>
            <person name="Yoshikawa Y."/>
            <person name="Matsunawa H."/>
            <person name="Ichihara T."/>
            <person name="Shiohata N."/>
            <person name="Sano S."/>
            <person name="Moriya S."/>
            <person name="Momiyama H."/>
            <person name="Satoh N."/>
            <person name="Takami S."/>
            <person name="Terashima Y."/>
            <person name="Suzuki O."/>
            <person name="Nakagawa S."/>
            <person name="Senoh A."/>
            <person name="Mizoguchi H."/>
            <person name="Goto Y."/>
            <person name="Shimizu F."/>
            <person name="Wakebe H."/>
            <person name="Hishigaki H."/>
            <person name="Watanabe T."/>
            <person name="Sugiyama A."/>
            <person name="Takemoto M."/>
            <person name="Kawakami B."/>
            <person name="Yamazaki M."/>
            <person name="Watanabe K."/>
            <person name="Kumagai A."/>
            <person name="Itakura S."/>
            <person name="Fukuzumi Y."/>
            <person name="Fujimori Y."/>
            <person name="Komiyama M."/>
            <person name="Tashiro H."/>
            <person name="Tanigami A."/>
            <person name="Fujiwara T."/>
            <person name="Ono T."/>
            <person name="Yamada K."/>
            <person name="Fujii Y."/>
            <person name="Ozaki K."/>
            <person name="Hirao M."/>
            <person name="Ohmori Y."/>
            <person name="Kawabata A."/>
            <person name="Hikiji T."/>
            <person name="Kobatake N."/>
            <person name="Inagaki H."/>
            <person name="Ikema Y."/>
            <person name="Okamoto S."/>
            <person name="Okitani R."/>
            <person name="Kawakami T."/>
            <person name="Noguchi S."/>
            <person name="Itoh T."/>
            <person name="Shigeta K."/>
            <person name="Senba T."/>
            <person name="Matsumura K."/>
            <person name="Nakajima Y."/>
            <person name="Mizuno T."/>
            <person name="Morinaga M."/>
            <person name="Sasaki M."/>
            <person name="Togashi T."/>
            <person name="Oyama M."/>
            <person name="Hata H."/>
            <person name="Watanabe M."/>
            <person name="Komatsu T."/>
            <person name="Mizushima-Sugano J."/>
            <person name="Satoh T."/>
            <person name="Shirai Y."/>
            <person name="Takahashi Y."/>
            <person name="Nakagawa K."/>
            <person name="Okumura K."/>
            <person name="Nagase T."/>
            <person name="Nomura N."/>
            <person name="Kikuchi H."/>
            <person name="Masuho Y."/>
            <person name="Yamashita R."/>
            <person name="Nakai K."/>
            <person name="Yada T."/>
            <person name="Nakamura Y."/>
            <person name="Ohara O."/>
            <person name="Isogai T."/>
            <person name="Sugano S."/>
        </authorList>
    </citation>
    <scope>NUCLEOTIDE SEQUENCE [LARGE SCALE MRNA] (ISOFORMS 1; 2; 3 AND 4)</scope>
    <scope>VARIANT LYS-385</scope>
    <source>
        <tissue>Placenta</tissue>
        <tissue>Testis</tissue>
        <tissue>Trachea</tissue>
    </source>
</reference>
<reference key="3">
    <citation type="journal article" date="2006" name="Nature">
        <title>The DNA sequence and biological annotation of human chromosome 1.</title>
        <authorList>
            <person name="Gregory S.G."/>
            <person name="Barlow K.F."/>
            <person name="McLay K.E."/>
            <person name="Kaul R."/>
            <person name="Swarbreck D."/>
            <person name="Dunham A."/>
            <person name="Scott C.E."/>
            <person name="Howe K.L."/>
            <person name="Woodfine K."/>
            <person name="Spencer C.C.A."/>
            <person name="Jones M.C."/>
            <person name="Gillson C."/>
            <person name="Searle S."/>
            <person name="Zhou Y."/>
            <person name="Kokocinski F."/>
            <person name="McDonald L."/>
            <person name="Evans R."/>
            <person name="Phillips K."/>
            <person name="Atkinson A."/>
            <person name="Cooper R."/>
            <person name="Jones C."/>
            <person name="Hall R.E."/>
            <person name="Andrews T.D."/>
            <person name="Lloyd C."/>
            <person name="Ainscough R."/>
            <person name="Almeida J.P."/>
            <person name="Ambrose K.D."/>
            <person name="Anderson F."/>
            <person name="Andrew R.W."/>
            <person name="Ashwell R.I.S."/>
            <person name="Aubin K."/>
            <person name="Babbage A.K."/>
            <person name="Bagguley C.L."/>
            <person name="Bailey J."/>
            <person name="Beasley H."/>
            <person name="Bethel G."/>
            <person name="Bird C.P."/>
            <person name="Bray-Allen S."/>
            <person name="Brown J.Y."/>
            <person name="Brown A.J."/>
            <person name="Buckley D."/>
            <person name="Burton J."/>
            <person name="Bye J."/>
            <person name="Carder C."/>
            <person name="Chapman J.C."/>
            <person name="Clark S.Y."/>
            <person name="Clarke G."/>
            <person name="Clee C."/>
            <person name="Cobley V."/>
            <person name="Collier R.E."/>
            <person name="Corby N."/>
            <person name="Coville G.J."/>
            <person name="Davies J."/>
            <person name="Deadman R."/>
            <person name="Dunn M."/>
            <person name="Earthrowl M."/>
            <person name="Ellington A.G."/>
            <person name="Errington H."/>
            <person name="Frankish A."/>
            <person name="Frankland J."/>
            <person name="French L."/>
            <person name="Garner P."/>
            <person name="Garnett J."/>
            <person name="Gay L."/>
            <person name="Ghori M.R.J."/>
            <person name="Gibson R."/>
            <person name="Gilby L.M."/>
            <person name="Gillett W."/>
            <person name="Glithero R.J."/>
            <person name="Grafham D.V."/>
            <person name="Griffiths C."/>
            <person name="Griffiths-Jones S."/>
            <person name="Grocock R."/>
            <person name="Hammond S."/>
            <person name="Harrison E.S.I."/>
            <person name="Hart E."/>
            <person name="Haugen E."/>
            <person name="Heath P.D."/>
            <person name="Holmes S."/>
            <person name="Holt K."/>
            <person name="Howden P.J."/>
            <person name="Hunt A.R."/>
            <person name="Hunt S.E."/>
            <person name="Hunter G."/>
            <person name="Isherwood J."/>
            <person name="James R."/>
            <person name="Johnson C."/>
            <person name="Johnson D."/>
            <person name="Joy A."/>
            <person name="Kay M."/>
            <person name="Kershaw J.K."/>
            <person name="Kibukawa M."/>
            <person name="Kimberley A.M."/>
            <person name="King A."/>
            <person name="Knights A.J."/>
            <person name="Lad H."/>
            <person name="Laird G."/>
            <person name="Lawlor S."/>
            <person name="Leongamornlert D.A."/>
            <person name="Lloyd D.M."/>
            <person name="Loveland J."/>
            <person name="Lovell J."/>
            <person name="Lush M.J."/>
            <person name="Lyne R."/>
            <person name="Martin S."/>
            <person name="Mashreghi-Mohammadi M."/>
            <person name="Matthews L."/>
            <person name="Matthews N.S.W."/>
            <person name="McLaren S."/>
            <person name="Milne S."/>
            <person name="Mistry S."/>
            <person name="Moore M.J.F."/>
            <person name="Nickerson T."/>
            <person name="O'Dell C.N."/>
            <person name="Oliver K."/>
            <person name="Palmeiri A."/>
            <person name="Palmer S.A."/>
            <person name="Parker A."/>
            <person name="Patel D."/>
            <person name="Pearce A.V."/>
            <person name="Peck A.I."/>
            <person name="Pelan S."/>
            <person name="Phelps K."/>
            <person name="Phillimore B.J."/>
            <person name="Plumb R."/>
            <person name="Rajan J."/>
            <person name="Raymond C."/>
            <person name="Rouse G."/>
            <person name="Saenphimmachak C."/>
            <person name="Sehra H.K."/>
            <person name="Sheridan E."/>
            <person name="Shownkeen R."/>
            <person name="Sims S."/>
            <person name="Skuce C.D."/>
            <person name="Smith M."/>
            <person name="Steward C."/>
            <person name="Subramanian S."/>
            <person name="Sycamore N."/>
            <person name="Tracey A."/>
            <person name="Tromans A."/>
            <person name="Van Helmond Z."/>
            <person name="Wall M."/>
            <person name="Wallis J.M."/>
            <person name="White S."/>
            <person name="Whitehead S.L."/>
            <person name="Wilkinson J.E."/>
            <person name="Willey D.L."/>
            <person name="Williams H."/>
            <person name="Wilming L."/>
            <person name="Wray P.W."/>
            <person name="Wu Z."/>
            <person name="Coulson A."/>
            <person name="Vaudin M."/>
            <person name="Sulston J.E."/>
            <person name="Durbin R.M."/>
            <person name="Hubbard T."/>
            <person name="Wooster R."/>
            <person name="Dunham I."/>
            <person name="Carter N.P."/>
            <person name="McVean G."/>
            <person name="Ross M.T."/>
            <person name="Harrow J."/>
            <person name="Olson M.V."/>
            <person name="Beck S."/>
            <person name="Rogers J."/>
            <person name="Bentley D.R."/>
        </authorList>
    </citation>
    <scope>NUCLEOTIDE SEQUENCE [LARGE SCALE GENOMIC DNA]</scope>
</reference>
<reference key="4">
    <citation type="submission" date="2005-09" db="EMBL/GenBank/DDBJ databases">
        <authorList>
            <person name="Mural R.J."/>
            <person name="Istrail S."/>
            <person name="Sutton G.G."/>
            <person name="Florea L."/>
            <person name="Halpern A.L."/>
            <person name="Mobarry C.M."/>
            <person name="Lippert R."/>
            <person name="Walenz B."/>
            <person name="Shatkay H."/>
            <person name="Dew I."/>
            <person name="Miller J.R."/>
            <person name="Flanigan M.J."/>
            <person name="Edwards N.J."/>
            <person name="Bolanos R."/>
            <person name="Fasulo D."/>
            <person name="Halldorsson B.V."/>
            <person name="Hannenhalli S."/>
            <person name="Turner R."/>
            <person name="Yooseph S."/>
            <person name="Lu F."/>
            <person name="Nusskern D.R."/>
            <person name="Shue B.C."/>
            <person name="Zheng X.H."/>
            <person name="Zhong F."/>
            <person name="Delcher A.L."/>
            <person name="Huson D.H."/>
            <person name="Kravitz S.A."/>
            <person name="Mouchard L."/>
            <person name="Reinert K."/>
            <person name="Remington K.A."/>
            <person name="Clark A.G."/>
            <person name="Waterman M.S."/>
            <person name="Eichler E.E."/>
            <person name="Adams M.D."/>
            <person name="Hunkapiller M.W."/>
            <person name="Myers E.W."/>
            <person name="Venter J.C."/>
        </authorList>
    </citation>
    <scope>NUCLEOTIDE SEQUENCE [LARGE SCALE GENOMIC DNA]</scope>
    <scope>VARIANT LYS-385</scope>
</reference>
<reference key="5">
    <citation type="journal article" date="2004" name="Genome Res.">
        <title>The status, quality, and expansion of the NIH full-length cDNA project: the Mammalian Gene Collection (MGC).</title>
        <authorList>
            <consortium name="The MGC Project Team"/>
        </authorList>
    </citation>
    <scope>NUCLEOTIDE SEQUENCE [LARGE SCALE MRNA] (ISOFORM 1)</scope>
    <scope>VARIANT LYS-385</scope>
    <source>
        <tissue>Brain</tissue>
    </source>
</reference>
<reference key="6">
    <citation type="journal article" date="2008" name="Proc. Natl. Acad. Sci. U.S.A.">
        <title>A quantitative atlas of mitotic phosphorylation.</title>
        <authorList>
            <person name="Dephoure N."/>
            <person name="Zhou C."/>
            <person name="Villen J."/>
            <person name="Beausoleil S.A."/>
            <person name="Bakalarski C.E."/>
            <person name="Elledge S.J."/>
            <person name="Gygi S.P."/>
        </authorList>
    </citation>
    <scope>IDENTIFICATION BY MASS SPECTROMETRY [LARGE SCALE ANALYSIS]</scope>
    <source>
        <tissue>Cervix carcinoma</tissue>
    </source>
</reference>
<reference key="7">
    <citation type="journal article" date="2013" name="J. Proteome Res.">
        <title>Toward a comprehensive characterization of a human cancer cell phosphoproteome.</title>
        <authorList>
            <person name="Zhou H."/>
            <person name="Di Palma S."/>
            <person name="Preisinger C."/>
            <person name="Peng M."/>
            <person name="Polat A.N."/>
            <person name="Heck A.J."/>
            <person name="Mohammed S."/>
        </authorList>
    </citation>
    <scope>PHOSPHORYLATION [LARGE SCALE ANALYSIS] AT SER-103 AND SER-441</scope>
    <scope>IDENTIFICATION BY MASS SPECTROMETRY [LARGE SCALE ANALYSIS]</scope>
    <source>
        <tissue>Erythroleukemia</tissue>
    </source>
</reference>
<reference key="8">
    <citation type="journal article" date="2014" name="J. Proteomics">
        <title>An enzyme assisted RP-RPLC approach for in-depth analysis of human liver phosphoproteome.</title>
        <authorList>
            <person name="Bian Y."/>
            <person name="Song C."/>
            <person name="Cheng K."/>
            <person name="Dong M."/>
            <person name="Wang F."/>
            <person name="Huang J."/>
            <person name="Sun D."/>
            <person name="Wang L."/>
            <person name="Ye M."/>
            <person name="Zou H."/>
        </authorList>
    </citation>
    <scope>PHOSPHORYLATION [LARGE SCALE ANALYSIS] AT SER-441</scope>
    <scope>IDENTIFICATION BY MASS SPECTROMETRY [LARGE SCALE ANALYSIS]</scope>
    <source>
        <tissue>Liver</tissue>
    </source>
</reference>
<reference key="9">
    <citation type="journal article" date="2016" name="Mol. Cell">
        <title>MINDY-1 is a member of an evolutionarily conserved and structurally distinct new family of deubiquitinating enzymes.</title>
        <authorList>
            <person name="Abdul Rehman S.A."/>
            <person name="Kristariyanto Y.A."/>
            <person name="Choi S.Y."/>
            <person name="Nkosi P.J."/>
            <person name="Weidlich S."/>
            <person name="Labib K."/>
            <person name="Hofmann K."/>
            <person name="Kulathu Y."/>
        </authorList>
    </citation>
    <scope>X-RAY CRYSTALLOGRAPHY (3.0 ANGSTROMS) OF 110-384</scope>
    <scope>X-RAY CRYSTALLOGRAPHY (2.65 ANGSTROMS) OF 110-384 IN COMPLEX WITH UBIQUITIN</scope>
    <scope>FUNCTION</scope>
    <scope>CATALYTIC ACTIVITY</scope>
    <scope>MUTAGENESIS OF GLN-131; CYS-137; ASP-209; VAL-210; TRP-240; TYR-258; GLU-263; PHE-315; HIS-319 AND 415-LEU-ALA-416</scope>
    <scope>GENE FAMILY</scope>
</reference>
<reference key="10">
    <citation type="journal article" date="2017" name="EMBO Rep.">
        <title>A single MIU motif of MINDY-1 recognizes K48-linked polyubiquitin chains.</title>
        <authorList>
            <person name="Kristariyanto Y.A."/>
            <person name="Abdul Rehman S.A."/>
            <person name="Weidlich S."/>
            <person name="Knebel A."/>
            <person name="Kulathu Y."/>
        </authorList>
    </citation>
    <scope>X-RAY CRYSTALLOGRAPHY (2.05 ANGSTROMS) OF 388-426 IN COMPLEX WITH UBIQUITIN</scope>
    <scope>BINDING TO 'LYS-47' POLYUBIQUITIN CHAINS</scope>
    <scope>MUTAGENESIS OF ALA-396; LEU-408; THR-411; ASP-412; LEU-413; GLU-414; LEU-415; ALA-416; GLN-418; LEU-419; GLN-420; GLN-421; GLU-422; GLU-423 AND TYR-424</scope>
</reference>
<evidence type="ECO:0000256" key="1">
    <source>
        <dbReference type="SAM" id="MobiDB-lite"/>
    </source>
</evidence>
<evidence type="ECO:0000269" key="2">
    <source>
    </source>
</evidence>
<evidence type="ECO:0000269" key="3">
    <source>
    </source>
</evidence>
<evidence type="ECO:0000269" key="4">
    <source>
    </source>
</evidence>
<evidence type="ECO:0000269" key="5">
    <source>
    </source>
</evidence>
<evidence type="ECO:0000269" key="6">
    <source>
    </source>
</evidence>
<evidence type="ECO:0000269" key="7">
    <source ref="4"/>
</evidence>
<evidence type="ECO:0000303" key="8">
    <source>
    </source>
</evidence>
<evidence type="ECO:0000303" key="9">
    <source>
    </source>
</evidence>
<evidence type="ECO:0000305" key="10"/>
<evidence type="ECO:0000305" key="11">
    <source>
    </source>
</evidence>
<evidence type="ECO:0000312" key="12">
    <source>
        <dbReference type="HGNC" id="HGNC:25648"/>
    </source>
</evidence>
<evidence type="ECO:0007744" key="13">
    <source>
    </source>
</evidence>
<evidence type="ECO:0007744" key="14">
    <source>
    </source>
</evidence>
<evidence type="ECO:0007829" key="15">
    <source>
        <dbReference type="PDB" id="5JKN"/>
    </source>
</evidence>
<evidence type="ECO:0007829" key="16">
    <source>
        <dbReference type="PDB" id="5MN9"/>
    </source>
</evidence>
<evidence type="ECO:0007829" key="17">
    <source>
        <dbReference type="PDB" id="6TUV"/>
    </source>
</evidence>
<evidence type="ECO:0007829" key="18">
    <source>
        <dbReference type="PDB" id="6YJG"/>
    </source>
</evidence>
<proteinExistence type="evidence at protein level"/>
<feature type="chain" id="PRO_0000344037" description="Ubiquitin carboxyl-terminal hydrolase MINDY-1">
    <location>
        <begin position="1"/>
        <end position="469"/>
    </location>
</feature>
<feature type="region of interest" description="Disordered" evidence="1">
    <location>
        <begin position="1"/>
        <end position="85"/>
    </location>
</feature>
<feature type="region of interest" description="Ubiquitin-binding domain (UBD)" evidence="11">
    <location>
        <begin position="388"/>
        <end position="426"/>
    </location>
</feature>
<feature type="region of interest" description="Disordered" evidence="1">
    <location>
        <begin position="441"/>
        <end position="469"/>
    </location>
</feature>
<feature type="compositionally biased region" description="Basic and acidic residues" evidence="1">
    <location>
        <begin position="23"/>
        <end position="53"/>
    </location>
</feature>
<feature type="compositionally biased region" description="Low complexity" evidence="1">
    <location>
        <begin position="66"/>
        <end position="76"/>
    </location>
</feature>
<feature type="compositionally biased region" description="Basic and acidic residues" evidence="1">
    <location>
        <begin position="453"/>
        <end position="469"/>
    </location>
</feature>
<feature type="active site" description="Nucleophile" evidence="11">
    <location>
        <position position="137"/>
    </location>
</feature>
<feature type="active site" description="Proton acceptor" evidence="11">
    <location>
        <position position="319"/>
    </location>
</feature>
<feature type="site" description="Ubiquitin-binding" evidence="6">
    <location>
        <position position="412"/>
    </location>
</feature>
<feature type="site" description="Ubiquitin-binding" evidence="6">
    <location>
        <begin position="415"/>
        <end position="416"/>
    </location>
</feature>
<feature type="site" description="Ubiquitin-binding" evidence="6">
    <location>
        <position position="419"/>
    </location>
</feature>
<feature type="modified residue" description="Phosphoserine" evidence="13">
    <location>
        <position position="103"/>
    </location>
</feature>
<feature type="modified residue" description="Phosphoserine" evidence="13 14">
    <location>
        <position position="441"/>
    </location>
</feature>
<feature type="splice variant" id="VSP_034715" description="In isoform 2." evidence="8">
    <location>
        <begin position="1"/>
        <end position="142"/>
    </location>
</feature>
<feature type="splice variant" id="VSP_037076" description="In isoform 4." evidence="8">
    <location>
        <begin position="1"/>
        <end position="95"/>
    </location>
</feature>
<feature type="splice variant" id="VSP_037077" description="In isoform 3." evidence="8">
    <original>M</original>
    <variation>MLLGPPPFNESTKPSPSPCHSFASQAWLRQVPEVSKHLQCPSAKSLLTM</variation>
    <location>
        <position position="1"/>
    </location>
</feature>
<feature type="sequence variant" id="VAR_044541" description="In dbSNP:rs2925741." evidence="2 3 4 7">
    <original>T</original>
    <variation>K</variation>
    <location>
        <position position="385"/>
    </location>
</feature>
<feature type="mutagenesis site" description="Abolishes ubiquitin hydrolase activity." evidence="5">
    <original>Q</original>
    <variation>A</variation>
    <variation>E</variation>
    <location>
        <position position="131"/>
    </location>
</feature>
<feature type="mutagenesis site" description="Abolishes ubiquitin hydrolase activity." evidence="5">
    <original>C</original>
    <variation>A</variation>
    <location>
        <position position="137"/>
    </location>
</feature>
<feature type="mutagenesis site" description="Abolishes ubiquitin hydrolase activity." evidence="5">
    <original>D</original>
    <variation>A</variation>
    <location>
        <position position="209"/>
    </location>
</feature>
<feature type="mutagenesis site" description="Greatly impairs ubiquitin hydrolase activity." evidence="5">
    <original>V</original>
    <variation>A</variation>
    <location>
        <position position="210"/>
    </location>
</feature>
<feature type="mutagenesis site" description="Abolishes ubiquitin hydrolase activity." evidence="5">
    <original>W</original>
    <variation>A</variation>
    <location>
        <position position="240"/>
    </location>
</feature>
<feature type="mutagenesis site" description="Abolishes ubiquitin hydrolase activity." evidence="5">
    <original>Y</original>
    <variation>A</variation>
    <location>
        <position position="258"/>
    </location>
</feature>
<feature type="mutagenesis site" description="Greatly impairs ubiquitin hydrolase activity." evidence="5">
    <original>E</original>
    <variation>A</variation>
    <location>
        <position position="263"/>
    </location>
</feature>
<feature type="mutagenesis site" description="Abolishes ubiquitin hydrolase activity." evidence="5">
    <original>E</original>
    <variation>R</variation>
    <location>
        <position position="263"/>
    </location>
</feature>
<feature type="mutagenesis site" description="Abolishes ubiquitin hydrolase activity." evidence="5">
    <original>F</original>
    <variation>A</variation>
    <location>
        <position position="315"/>
    </location>
</feature>
<feature type="mutagenesis site" description="Abolishes ubiquitin hydrolase activity." evidence="5">
    <original>H</original>
    <variation>A</variation>
    <location>
        <position position="319"/>
    </location>
</feature>
<feature type="mutagenesis site" description="No effect on binding to 'Lys-48' tetraubiquitin chains." evidence="6">
    <original>A</original>
    <variation>G</variation>
    <location>
        <position position="396"/>
    </location>
</feature>
<feature type="mutagenesis site" description="No effect on binding to 'Lys-48' tetraubiquitin chains." evidence="6">
    <original>L</original>
    <variation>A</variation>
    <location>
        <position position="408"/>
    </location>
</feature>
<feature type="mutagenesis site" description="No effect on binding to 'Lys-48' tetraubiquitin chains." evidence="6">
    <original>T</original>
    <variation>A</variation>
    <location>
        <position position="411"/>
    </location>
</feature>
<feature type="mutagenesis site" description="Loss of binding to 'Lys-48' tetraubiquitin chains." evidence="6">
    <original>D</original>
    <variation>A</variation>
    <location>
        <position position="412"/>
    </location>
</feature>
<feature type="mutagenesis site" description="No effect on binding to 'Lys-48' tetraubiquitin chains." evidence="6">
    <original>L</original>
    <variation>A</variation>
    <location>
        <position position="413"/>
    </location>
</feature>
<feature type="mutagenesis site" description="No effect on binding to 'Lys-48' tetraubiquitin chains." evidence="6">
    <original>E</original>
    <variation>A</variation>
    <location>
        <position position="414"/>
    </location>
</feature>
<feature type="mutagenesis site" description="Decreased association with 'Lys-48'-linked conjugated ubiquitin." evidence="5">
    <original>LA</original>
    <variation>AG</variation>
    <location>
        <begin position="415"/>
        <end position="416"/>
    </location>
</feature>
<feature type="mutagenesis site" description="Loss of binding to 'Lys-48' tetraubiquitin chains." evidence="6">
    <original>L</original>
    <variation>A</variation>
    <location>
        <position position="415"/>
    </location>
</feature>
<feature type="mutagenesis site" description="Loss of binding to 'Lys-48' tetraubiquitin chains." evidence="6">
    <original>A</original>
    <variation>G</variation>
    <variation>D</variation>
    <location>
        <position position="416"/>
    </location>
</feature>
<feature type="mutagenesis site" description="No effect on binding to 'Lys-48' tetraubiquitin chains." evidence="6">
    <original>A</original>
    <variation>S</variation>
    <location>
        <position position="416"/>
    </location>
</feature>
<feature type="mutagenesis site" description="No effect on binding to 'Lys-48' tetraubiquitin chains." evidence="6">
    <original>Q</original>
    <variation>A</variation>
    <variation>K</variation>
    <location>
        <position position="418"/>
    </location>
</feature>
<feature type="mutagenesis site" description="Loss of binding to 'Lys-48' tetraubiquitin chains." evidence="6">
    <original>L</original>
    <variation>A</variation>
    <location>
        <position position="419"/>
    </location>
</feature>
<feature type="mutagenesis site" description="Loss of binding to 'Lys-48' tetraubiquitin chains." evidence="6">
    <original>Q</original>
    <variation>A</variation>
    <location>
        <position position="420"/>
    </location>
</feature>
<feature type="mutagenesis site" description="No effect on binding to 'Lys-48' tetraubiquitin chains." evidence="6">
    <original>Q</original>
    <variation>E</variation>
    <variation>R</variation>
    <location>
        <position position="421"/>
    </location>
</feature>
<feature type="mutagenesis site" description="No effect on binding to 'Lys-48' tetraubiquitin chains." evidence="6">
    <original>E</original>
    <variation>A</variation>
    <location>
        <position position="422"/>
    </location>
</feature>
<feature type="mutagenesis site" description="Loss of binding to 'Lys-48' tetraubiquitin chains." evidence="6">
    <original>E</original>
    <variation>A</variation>
    <location>
        <position position="423"/>
    </location>
</feature>
<feature type="mutagenesis site" description="Loss of binding to 'Lys-48' tetraubiquitin chains." evidence="6">
    <original>E</original>
    <variation>EA</variation>
    <variation>EAAA</variation>
    <variation>EAAAAAA</variation>
    <variation>EAAAAAAA</variation>
    <location>
        <position position="423"/>
    </location>
</feature>
<feature type="mutagenesis site" description="Loss of binding to 'Lys-48' tetraubiquitin chains." evidence="6">
    <location>
        <position position="423"/>
    </location>
</feature>
<feature type="mutagenesis site" description="Decreased binding to 'Lys-48' tetraubiquitin chains." evidence="6">
    <original>Y</original>
    <variation>A</variation>
    <variation>D</variation>
    <variation>E</variation>
    <location>
        <position position="424"/>
    </location>
</feature>
<feature type="mutagenesis site" description="No effect on binding to 'Lys-48' tetraubiquitin chains." evidence="6">
    <original>Y</original>
    <variation>F</variation>
    <variation>W</variation>
    <location>
        <position position="424"/>
    </location>
</feature>
<feature type="sequence conflict" description="In Ref. 2; BAA92104." evidence="10" ref="2">
    <original>L</original>
    <variation>P</variation>
    <location>
        <position position="287"/>
    </location>
</feature>
<feature type="sequence conflict" description="In Ref. 2; BAA92104." evidence="10" ref="2">
    <original>S</original>
    <variation>R</variation>
    <location>
        <position position="367"/>
    </location>
</feature>
<feature type="strand" evidence="17">
    <location>
        <begin position="113"/>
        <end position="121"/>
    </location>
</feature>
<feature type="strand" evidence="17">
    <location>
        <begin position="124"/>
        <end position="129"/>
    </location>
</feature>
<feature type="strand" evidence="17">
    <location>
        <begin position="131"/>
        <end position="135"/>
    </location>
</feature>
<feature type="helix" evidence="17">
    <location>
        <begin position="137"/>
        <end position="148"/>
    </location>
</feature>
<feature type="strand" evidence="17">
    <location>
        <begin position="160"/>
        <end position="162"/>
    </location>
</feature>
<feature type="helix" evidence="17">
    <location>
        <begin position="163"/>
        <end position="175"/>
    </location>
</feature>
<feature type="helix" evidence="17">
    <location>
        <begin position="188"/>
        <end position="200"/>
    </location>
</feature>
<feature type="helix" evidence="17">
    <location>
        <begin position="201"/>
        <end position="205"/>
    </location>
</feature>
<feature type="strand" evidence="17">
    <location>
        <begin position="208"/>
        <end position="210"/>
    </location>
</feature>
<feature type="strand" evidence="18">
    <location>
        <begin position="212"/>
        <end position="215"/>
    </location>
</feature>
<feature type="helix" evidence="17">
    <location>
        <begin position="224"/>
        <end position="231"/>
    </location>
</feature>
<feature type="strand" evidence="15">
    <location>
        <begin position="236"/>
        <end position="239"/>
    </location>
</feature>
<feature type="helix" evidence="17">
    <location>
        <begin position="247"/>
        <end position="253"/>
    </location>
</feature>
<feature type="helix" evidence="17">
    <location>
        <begin position="258"/>
        <end position="269"/>
    </location>
</feature>
<feature type="helix" evidence="17">
    <location>
        <begin position="274"/>
        <end position="289"/>
    </location>
</feature>
<feature type="turn" evidence="17">
    <location>
        <begin position="290"/>
        <end position="292"/>
    </location>
</feature>
<feature type="helix" evidence="17">
    <location>
        <begin position="296"/>
        <end position="305"/>
    </location>
</feature>
<feature type="strand" evidence="17">
    <location>
        <begin position="311"/>
        <end position="315"/>
    </location>
</feature>
<feature type="strand" evidence="17">
    <location>
        <begin position="320"/>
        <end position="326"/>
    </location>
</feature>
<feature type="strand" evidence="17">
    <location>
        <begin position="329"/>
        <end position="333"/>
    </location>
</feature>
<feature type="helix" evidence="17">
    <location>
        <begin position="337"/>
        <end position="339"/>
    </location>
</feature>
<feature type="strand" evidence="17">
    <location>
        <begin position="347"/>
        <end position="350"/>
    </location>
</feature>
<feature type="strand" evidence="17">
    <location>
        <begin position="352"/>
        <end position="355"/>
    </location>
</feature>
<feature type="helix" evidence="16">
    <location>
        <begin position="411"/>
        <end position="425"/>
    </location>
</feature>
<feature type="sequence conflict" description="In Ref. 2; BAG63364." evidence="10" ref="2">
    <original>K</original>
    <variation>E</variation>
    <location sequence="Q8N5J2-3">
        <position position="44"/>
    </location>
</feature>
<name>MINY1_HUMAN</name>